<organism>
    <name type="scientific">Micromonospora griseorubida</name>
    <dbReference type="NCBI Taxonomy" id="28040"/>
    <lineage>
        <taxon>Bacteria</taxon>
        <taxon>Bacillati</taxon>
        <taxon>Actinomycetota</taxon>
        <taxon>Actinomycetes</taxon>
        <taxon>Micromonosporales</taxon>
        <taxon>Micromonosporaceae</taxon>
        <taxon>Micromonospora</taxon>
    </lineage>
</organism>
<comment type="function">
    <text evidence="2 3 5">Involved in the biosynthesis of mycinamicin, a 16-membered macrolide antibiotic. Catalyzes consecutive hydroxylation (at C14) and epoxidation (at C12-C13) reactions with mycinamicin IV as initial substrate, leading to mycinamicin II. These reactions require prior dimethylation of 6-deoxyallose to mycinose for effective conversion by the dual function MycG enzyme.</text>
</comment>
<comment type="cofactor">
    <cofactor evidence="4">
        <name>heme</name>
        <dbReference type="ChEBI" id="CHEBI:30413"/>
    </cofactor>
</comment>
<comment type="biophysicochemical properties">
    <kinetics>
        <KM evidence="2">16.2 uM for mycinamicin V</KM>
        <text evidence="2">kcat is 415.7 min(-1) for the epoxydation of mycinamicin V.</text>
    </kinetics>
</comment>
<comment type="pathway">
    <text evidence="3 9">Antibiotic biosynthesis; mycinamicin biosynthesis.</text>
</comment>
<comment type="disruption phenotype">
    <text evidence="3">Cells lacking this gene do not produce mycinamicin I, mycinamicin II and mycinamicin V, and accumulate mycinamicin IV.</text>
</comment>
<comment type="similarity">
    <text evidence="8">Belongs to the cytochrome P450 family.</text>
</comment>
<accession>Q59523</accession>
<evidence type="ECO:0000256" key="1">
    <source>
        <dbReference type="SAM" id="MobiDB-lite"/>
    </source>
</evidence>
<evidence type="ECO:0000269" key="2">
    <source>
    </source>
</evidence>
<evidence type="ECO:0000269" key="3">
    <source>
    </source>
</evidence>
<evidence type="ECO:0000269" key="4">
    <source>
    </source>
</evidence>
<evidence type="ECO:0000269" key="5">
    <source>
    </source>
</evidence>
<evidence type="ECO:0000303" key="6">
    <source>
    </source>
</evidence>
<evidence type="ECO:0000303" key="7">
    <source>
    </source>
</evidence>
<evidence type="ECO:0000305" key="8"/>
<evidence type="ECO:0000305" key="9">
    <source>
    </source>
</evidence>
<evidence type="ECO:0000312" key="10">
    <source>
        <dbReference type="EMBL" id="BAA03672.1"/>
    </source>
</evidence>
<evidence type="ECO:0007744" key="11">
    <source>
        <dbReference type="PDB" id="2Y46"/>
    </source>
</evidence>
<evidence type="ECO:0007744" key="12">
    <source>
        <dbReference type="PDB" id="2Y5N"/>
    </source>
</evidence>
<evidence type="ECO:0007744" key="13">
    <source>
        <dbReference type="PDB" id="2Y98"/>
    </source>
</evidence>
<evidence type="ECO:0007744" key="14">
    <source>
        <dbReference type="PDB" id="2YCA"/>
    </source>
</evidence>
<evidence type="ECO:0007744" key="15">
    <source>
        <dbReference type="PDB" id="3ZSN"/>
    </source>
</evidence>
<evidence type="ECO:0007829" key="16">
    <source>
        <dbReference type="PDB" id="2Y5N"/>
    </source>
</evidence>
<evidence type="ECO:0007829" key="17">
    <source>
        <dbReference type="PDB" id="2YCA"/>
    </source>
</evidence>
<evidence type="ECO:0007829" key="18">
    <source>
        <dbReference type="PDB" id="5UHU"/>
    </source>
</evidence>
<reference key="1">
    <citation type="journal article" date="1994" name="Mol. Gen. Genet.">
        <title>Characterization and expression of a P-450-like mycinamicin biosynthesis gene using a novel Micromonospora-Escherichia coli shuttle cosmid vector.</title>
        <authorList>
            <person name="Inouye M."/>
            <person name="Takada Y."/>
            <person name="Muto N."/>
            <person name="Horinouchi S."/>
            <person name="Beppu T."/>
        </authorList>
    </citation>
    <scope>NUCLEOTIDE SEQUENCE [GENOMIC DNA]</scope>
    <scope>FUNCTION</scope>
    <source>
        <strain evidence="10">A11725</strain>
    </source>
</reference>
<reference key="2">
    <citation type="journal article" date="2008" name="Chem. Biol.">
        <title>Functional analysis of MycCI and MycG, cytochrome P450 enzymes involved in biosynthesis of mycinamicin macrolide antibiotics.</title>
        <authorList>
            <person name="Anzai Y."/>
            <person name="Li S."/>
            <person name="Chaulagain M.R."/>
            <person name="Kinoshita K."/>
            <person name="Kato F."/>
            <person name="Montgomery J."/>
            <person name="Sherman D.H."/>
        </authorList>
    </citation>
    <scope>FUNCTION</scope>
    <scope>CATALYTIC ACTIVITY</scope>
    <scope>SUBSTRATE SPECIFICITY</scope>
    <scope>BIOPHYSICOCHEMICAL PROPERTIES</scope>
    <scope>PATHWAY</scope>
</reference>
<reference key="3">
    <citation type="journal article" date="2012" name="Antimicrob. Agents Chemother.">
        <title>Function of cytochrome P450 enzymes MycCI and MycG in Micromonospora griseorubida, a producer of the macrolide antibiotic mycinamicin.</title>
        <authorList>
            <person name="Anzai Y."/>
            <person name="Tsukada S."/>
            <person name="Sakai A."/>
            <person name="Masuda R."/>
            <person name="Harada C."/>
            <person name="Domeki A."/>
            <person name="Li S."/>
            <person name="Kinoshita K."/>
            <person name="Sherman D.H."/>
            <person name="Kato F."/>
        </authorList>
    </citation>
    <scope>FUNCTION</scope>
    <scope>DISRUPTION PHENOTYPE</scope>
    <scope>PATHWAY</scope>
    <source>
        <strain>A11725</strain>
    </source>
</reference>
<reference key="4">
    <citation type="journal article" date="2012" name="J. Biol. Chem.">
        <title>Substrate recognition by the multifunctional cytochrome P450 MycG in mycinamicin hydroxylation and epoxidation reactions.</title>
        <authorList>
            <person name="Li S."/>
            <person name="Tietz D.R."/>
            <person name="Rutaganira F.U."/>
            <person name="Kells P.M."/>
            <person name="Anzai Y."/>
            <person name="Kato F."/>
            <person name="Pochapsky T.C."/>
            <person name="Sherman D.H."/>
            <person name="Podust L.M."/>
        </authorList>
    </citation>
    <scope>X-RAY CRYSTALLOGRAPHY (1.62 ANGSTROMS) OF WILD-TYPE AND MUTANTS ALA-286 AND VAL-286 IN COMPLEXES WITH HEME; MYCINAMICIN III; MYCINAMICIN IV AND MYCINAMICIN V</scope>
    <scope>COFACTOR</scope>
    <scope>MUTAGENESIS OF PHE-286</scope>
</reference>
<gene>
    <name evidence="6" type="primary">mycG</name>
</gene>
<protein>
    <recommendedName>
        <fullName evidence="9">Mycinamicin IV hydroxylase/epoxidase</fullName>
        <ecNumber evidence="2">1.14.-.-</ecNumber>
    </recommendedName>
    <alternativeName>
        <fullName evidence="6">Cytochrome P450 MycG</fullName>
    </alternativeName>
    <alternativeName>
        <fullName evidence="7">Multifunctional P450 enzyme</fullName>
    </alternativeName>
    <alternativeName>
        <fullName evidence="9">Mycinamicin biosynthesis protein G</fullName>
    </alternativeName>
</protein>
<name>MYCG_MICGR</name>
<proteinExistence type="evidence at protein level"/>
<dbReference type="EC" id="1.14.-.-" evidence="2"/>
<dbReference type="EMBL" id="D16098">
    <property type="protein sequence ID" value="BAA03672.1"/>
    <property type="molecule type" value="Genomic_DNA"/>
</dbReference>
<dbReference type="PIR" id="S51594">
    <property type="entry name" value="S51594"/>
</dbReference>
<dbReference type="PDB" id="2Y46">
    <property type="method" value="X-ray"/>
    <property type="resolution" value="1.83 A"/>
    <property type="chains" value="A/B/C=1-397"/>
</dbReference>
<dbReference type="PDB" id="2Y5N">
    <property type="method" value="X-ray"/>
    <property type="resolution" value="1.62 A"/>
    <property type="chains" value="A/B=1-397"/>
</dbReference>
<dbReference type="PDB" id="2Y5Z">
    <property type="method" value="X-ray"/>
    <property type="resolution" value="2.06 A"/>
    <property type="chains" value="A/B/C=1-397"/>
</dbReference>
<dbReference type="PDB" id="2Y98">
    <property type="method" value="X-ray"/>
    <property type="resolution" value="1.65 A"/>
    <property type="chains" value="A=1-397"/>
</dbReference>
<dbReference type="PDB" id="2YCA">
    <property type="method" value="X-ray"/>
    <property type="resolution" value="1.80 A"/>
    <property type="chains" value="A=1-397"/>
</dbReference>
<dbReference type="PDB" id="2YGX">
    <property type="method" value="X-ray"/>
    <property type="resolution" value="2.39 A"/>
    <property type="chains" value="A/B/C/D=1-397"/>
</dbReference>
<dbReference type="PDB" id="3ZSN">
    <property type="method" value="X-ray"/>
    <property type="resolution" value="1.90 A"/>
    <property type="chains" value="A/B/C=1-397"/>
</dbReference>
<dbReference type="PDB" id="4AW3">
    <property type="method" value="X-ray"/>
    <property type="resolution" value="2.05 A"/>
    <property type="chains" value="A/B=1-397"/>
</dbReference>
<dbReference type="PDB" id="5UHU">
    <property type="method" value="NMR"/>
    <property type="chains" value="A=1-397"/>
</dbReference>
<dbReference type="PDBsum" id="2Y46"/>
<dbReference type="PDBsum" id="2Y5N"/>
<dbReference type="PDBsum" id="2Y5Z"/>
<dbReference type="PDBsum" id="2Y98"/>
<dbReference type="PDBsum" id="2YCA"/>
<dbReference type="PDBsum" id="2YGX"/>
<dbReference type="PDBsum" id="3ZSN"/>
<dbReference type="PDBsum" id="4AW3"/>
<dbReference type="PDBsum" id="5UHU"/>
<dbReference type="BMRB" id="Q59523"/>
<dbReference type="SMR" id="Q59523"/>
<dbReference type="KEGG" id="ag:BAA03672"/>
<dbReference type="BioCyc" id="MetaCyc:MONOMER-18369"/>
<dbReference type="UniPathway" id="UPA01019"/>
<dbReference type="EvolutionaryTrace" id="Q59523"/>
<dbReference type="GO" id="GO:0020037">
    <property type="term" value="F:heme binding"/>
    <property type="evidence" value="ECO:0000314"/>
    <property type="project" value="UniProtKB"/>
</dbReference>
<dbReference type="GO" id="GO:0005506">
    <property type="term" value="F:iron ion binding"/>
    <property type="evidence" value="ECO:0000314"/>
    <property type="project" value="UniProtKB"/>
</dbReference>
<dbReference type="GO" id="GO:0004497">
    <property type="term" value="F:monooxygenase activity"/>
    <property type="evidence" value="ECO:0000314"/>
    <property type="project" value="UniProtKB"/>
</dbReference>
<dbReference type="GO" id="GO:0016705">
    <property type="term" value="F:oxidoreductase activity, acting on paired donors, with incorporation or reduction of molecular oxygen"/>
    <property type="evidence" value="ECO:0007669"/>
    <property type="project" value="InterPro"/>
</dbReference>
<dbReference type="GO" id="GO:0017000">
    <property type="term" value="P:antibiotic biosynthetic process"/>
    <property type="evidence" value="ECO:0000314"/>
    <property type="project" value="UniProtKB"/>
</dbReference>
<dbReference type="CDD" id="cd11031">
    <property type="entry name" value="Cyp158A-like"/>
    <property type="match status" value="1"/>
</dbReference>
<dbReference type="FunFam" id="1.10.630.10:FF:000018">
    <property type="entry name" value="Cytochrome P450 monooxygenase"/>
    <property type="match status" value="1"/>
</dbReference>
<dbReference type="Gene3D" id="1.10.630.10">
    <property type="entry name" value="Cytochrome P450"/>
    <property type="match status" value="1"/>
</dbReference>
<dbReference type="InterPro" id="IPR001128">
    <property type="entry name" value="Cyt_P450"/>
</dbReference>
<dbReference type="InterPro" id="IPR002397">
    <property type="entry name" value="Cyt_P450_B"/>
</dbReference>
<dbReference type="InterPro" id="IPR017972">
    <property type="entry name" value="Cyt_P450_CS"/>
</dbReference>
<dbReference type="InterPro" id="IPR036396">
    <property type="entry name" value="Cyt_P450_sf"/>
</dbReference>
<dbReference type="PANTHER" id="PTHR46696:SF1">
    <property type="entry name" value="CYTOCHROME P450 YJIB-RELATED"/>
    <property type="match status" value="1"/>
</dbReference>
<dbReference type="PANTHER" id="PTHR46696">
    <property type="entry name" value="P450, PUTATIVE (EUROFUNG)-RELATED"/>
    <property type="match status" value="1"/>
</dbReference>
<dbReference type="Pfam" id="PF00067">
    <property type="entry name" value="p450"/>
    <property type="match status" value="2"/>
</dbReference>
<dbReference type="PRINTS" id="PR00359">
    <property type="entry name" value="BP450"/>
</dbReference>
<dbReference type="PRINTS" id="PR00385">
    <property type="entry name" value="P450"/>
</dbReference>
<dbReference type="SUPFAM" id="SSF48264">
    <property type="entry name" value="Cytochrome P450"/>
    <property type="match status" value="1"/>
</dbReference>
<dbReference type="PROSITE" id="PS00086">
    <property type="entry name" value="CYTOCHROME_P450"/>
    <property type="match status" value="1"/>
</dbReference>
<sequence length="397" mass="44332">MTSAEPRAYPFNDVHGLTLAGRYGELQETEPVSRVRPPYGEEAWLVTRYEDVRAVLGDGRFVRGPSMTRDEPRTRPEMVKGGLLSMDPPEHSRLRRLVVKAFTARRAESLRPRAREIAHELVDQMAATGQPADLVAMFARQLPVRVICELLGVPSADHDRFTRWSGAFLSTAEVTAEEMQEAAEQAYAYMGDLIDRRRKEPTDDLVSALVQARDQQDSLSEQELLDLAIGLLVAGYESTTTQIADFVYLLMTRPELRRQLLDRPELIPSAVEELTRWVPLGVGTAFPRYAVEDVTLRGVTIRAGEPVLASTGAANRDQAQFPDADRIDVDRTPNQHLGFGHGVHHCLGAPLARVELQVALEVLLQRLPGIRLGIPETQLRWSEGMLLRGPLELPVVW</sequence>
<keyword id="KW-0002">3D-structure</keyword>
<keyword id="KW-0045">Antibiotic biosynthesis</keyword>
<keyword id="KW-0349">Heme</keyword>
<keyword id="KW-0408">Iron</keyword>
<keyword id="KW-0479">Metal-binding</keyword>
<keyword id="KW-0503">Monooxygenase</keyword>
<keyword id="KW-0521">NADP</keyword>
<keyword id="KW-0560">Oxidoreductase</keyword>
<feature type="chain" id="PRO_0000434765" description="Mycinamicin IV hydroxylase/epoxidase">
    <location>
        <begin position="1"/>
        <end position="397"/>
    </location>
</feature>
<feature type="region of interest" description="Disordered" evidence="1">
    <location>
        <begin position="63"/>
        <end position="86"/>
    </location>
</feature>
<feature type="compositionally biased region" description="Basic and acidic residues" evidence="1">
    <location>
        <begin position="68"/>
        <end position="78"/>
    </location>
</feature>
<feature type="binding site" evidence="4 11 13 15">
    <location>
        <position position="81"/>
    </location>
    <ligand>
        <name>substrate</name>
    </ligand>
</feature>
<feature type="binding site" evidence="4">
    <location>
        <position position="91"/>
    </location>
    <ligand>
        <name>heme</name>
        <dbReference type="ChEBI" id="CHEBI:30413"/>
    </ligand>
</feature>
<feature type="binding site" evidence="4">
    <location>
        <position position="95"/>
    </location>
    <ligand>
        <name>heme</name>
        <dbReference type="ChEBI" id="CHEBI:30413"/>
    </ligand>
</feature>
<feature type="binding site" evidence="4">
    <location>
        <position position="288"/>
    </location>
    <ligand>
        <name>heme</name>
        <dbReference type="ChEBI" id="CHEBI:30413"/>
    </ligand>
</feature>
<feature type="binding site" evidence="4">
    <location>
        <position position="344"/>
    </location>
    <ligand>
        <name>heme</name>
        <dbReference type="ChEBI" id="CHEBI:30413"/>
    </ligand>
</feature>
<feature type="binding site" description="axial binding residue" evidence="4 12 13 14">
    <location>
        <position position="346"/>
    </location>
    <ligand>
        <name>heme</name>
        <dbReference type="ChEBI" id="CHEBI:30413"/>
    </ligand>
    <ligandPart>
        <name>Fe</name>
        <dbReference type="ChEBI" id="CHEBI:18248"/>
    </ligandPart>
</feature>
<feature type="mutagenesis site" description="Decrease in catalytic activity." evidence="4">
    <original>F</original>
    <variation>A</variation>
    <variation>V</variation>
    <location>
        <position position="286"/>
    </location>
</feature>
<feature type="strand" evidence="16">
    <location>
        <begin position="6"/>
        <end position="9"/>
    </location>
</feature>
<feature type="strand" evidence="16">
    <location>
        <begin position="14"/>
        <end position="16"/>
    </location>
</feature>
<feature type="helix" evidence="16">
    <location>
        <begin position="21"/>
        <end position="29"/>
    </location>
</feature>
<feature type="strand" evidence="16">
    <location>
        <begin position="31"/>
        <end position="36"/>
    </location>
</feature>
<feature type="strand" evidence="16">
    <location>
        <begin position="38"/>
        <end position="40"/>
    </location>
</feature>
<feature type="strand" evidence="16">
    <location>
        <begin position="43"/>
        <end position="46"/>
    </location>
</feature>
<feature type="helix" evidence="16">
    <location>
        <begin position="49"/>
        <end position="56"/>
    </location>
</feature>
<feature type="strand" evidence="16">
    <location>
        <begin position="61"/>
        <end position="63"/>
    </location>
</feature>
<feature type="helix" evidence="16">
    <location>
        <begin position="64"/>
        <end position="67"/>
    </location>
</feature>
<feature type="strand" evidence="16">
    <location>
        <begin position="73"/>
        <end position="77"/>
    </location>
</feature>
<feature type="helix" evidence="16">
    <location>
        <begin position="83"/>
        <end position="85"/>
    </location>
</feature>
<feature type="helix" evidence="16">
    <location>
        <begin position="90"/>
        <end position="101"/>
    </location>
</feature>
<feature type="helix" evidence="16">
    <location>
        <begin position="104"/>
        <end position="109"/>
    </location>
</feature>
<feature type="helix" evidence="16">
    <location>
        <begin position="111"/>
        <end position="128"/>
    </location>
</feature>
<feature type="strand" evidence="16">
    <location>
        <begin position="130"/>
        <end position="133"/>
    </location>
</feature>
<feature type="helix" evidence="16">
    <location>
        <begin position="134"/>
        <end position="137"/>
    </location>
</feature>
<feature type="turn" evidence="16">
    <location>
        <begin position="138"/>
        <end position="141"/>
    </location>
</feature>
<feature type="helix" evidence="16">
    <location>
        <begin position="142"/>
        <end position="151"/>
    </location>
</feature>
<feature type="helix" evidence="16">
    <location>
        <begin position="155"/>
        <end position="157"/>
    </location>
</feature>
<feature type="helix" evidence="16">
    <location>
        <begin position="158"/>
        <end position="166"/>
    </location>
</feature>
<feature type="strand" evidence="18">
    <location>
        <begin position="170"/>
        <end position="172"/>
    </location>
</feature>
<feature type="helix" evidence="16">
    <location>
        <begin position="176"/>
        <end position="199"/>
    </location>
</feature>
<feature type="helix" evidence="16">
    <location>
        <begin position="205"/>
        <end position="211"/>
    </location>
</feature>
<feature type="helix" evidence="16">
    <location>
        <begin position="221"/>
        <end position="252"/>
    </location>
</feature>
<feature type="helix" evidence="16">
    <location>
        <begin position="254"/>
        <end position="262"/>
    </location>
</feature>
<feature type="helix" evidence="16">
    <location>
        <begin position="264"/>
        <end position="266"/>
    </location>
</feature>
<feature type="helix" evidence="16">
    <location>
        <begin position="267"/>
        <end position="277"/>
    </location>
</feature>
<feature type="strand" evidence="16">
    <location>
        <begin position="281"/>
        <end position="283"/>
    </location>
</feature>
<feature type="strand" evidence="16">
    <location>
        <begin position="288"/>
        <end position="292"/>
    </location>
</feature>
<feature type="strand" evidence="16">
    <location>
        <begin position="294"/>
        <end position="296"/>
    </location>
</feature>
<feature type="strand" evidence="16">
    <location>
        <begin position="299"/>
        <end position="301"/>
    </location>
</feature>
<feature type="strand" evidence="16">
    <location>
        <begin position="306"/>
        <end position="309"/>
    </location>
</feature>
<feature type="helix" evidence="16">
    <location>
        <begin position="311"/>
        <end position="314"/>
    </location>
</feature>
<feature type="turn" evidence="16">
    <location>
        <begin position="318"/>
        <end position="320"/>
    </location>
</feature>
<feature type="turn" evidence="16">
    <location>
        <begin position="322"/>
        <end position="325"/>
    </location>
</feature>
<feature type="helix" evidence="17">
    <location>
        <begin position="342"/>
        <end position="344"/>
    </location>
</feature>
<feature type="helix" evidence="16">
    <location>
        <begin position="349"/>
        <end position="366"/>
    </location>
</feature>
<feature type="strand" evidence="16">
    <location>
        <begin position="371"/>
        <end position="374"/>
    </location>
</feature>
<feature type="helix" evidence="16">
    <location>
        <begin position="376"/>
        <end position="378"/>
    </location>
</feature>
<feature type="strand" evidence="16">
    <location>
        <begin position="385"/>
        <end position="387"/>
    </location>
</feature>
<feature type="strand" evidence="16">
    <location>
        <begin position="394"/>
        <end position="396"/>
    </location>
</feature>